<protein>
    <recommendedName>
        <fullName evidence="1">Chromosomal replication initiator protein DnaA</fullName>
    </recommendedName>
</protein>
<name>DNAA_CAUSK</name>
<reference key="1">
    <citation type="submission" date="2008-01" db="EMBL/GenBank/DDBJ databases">
        <title>Complete sequence of chromosome of Caulobacter sp. K31.</title>
        <authorList>
            <consortium name="US DOE Joint Genome Institute"/>
            <person name="Copeland A."/>
            <person name="Lucas S."/>
            <person name="Lapidus A."/>
            <person name="Barry K."/>
            <person name="Glavina del Rio T."/>
            <person name="Dalin E."/>
            <person name="Tice H."/>
            <person name="Pitluck S."/>
            <person name="Bruce D."/>
            <person name="Goodwin L."/>
            <person name="Thompson L.S."/>
            <person name="Brettin T."/>
            <person name="Detter J.C."/>
            <person name="Han C."/>
            <person name="Schmutz J."/>
            <person name="Larimer F."/>
            <person name="Land M."/>
            <person name="Hauser L."/>
            <person name="Kyrpides N."/>
            <person name="Kim E."/>
            <person name="Stephens C."/>
            <person name="Richardson P."/>
        </authorList>
    </citation>
    <scope>NUCLEOTIDE SEQUENCE [LARGE SCALE GENOMIC DNA]</scope>
    <source>
        <strain>K31</strain>
    </source>
</reference>
<accession>B0T135</accession>
<organism>
    <name type="scientific">Caulobacter sp. (strain K31)</name>
    <dbReference type="NCBI Taxonomy" id="366602"/>
    <lineage>
        <taxon>Bacteria</taxon>
        <taxon>Pseudomonadati</taxon>
        <taxon>Pseudomonadota</taxon>
        <taxon>Alphaproteobacteria</taxon>
        <taxon>Caulobacterales</taxon>
        <taxon>Caulobacteraceae</taxon>
        <taxon>Caulobacter</taxon>
    </lineage>
</organism>
<feature type="chain" id="PRO_1000079941" description="Chromosomal replication initiator protein DnaA">
    <location>
        <begin position="1"/>
        <end position="487"/>
    </location>
</feature>
<feature type="region of interest" description="Domain I, interacts with DnaA modulators" evidence="1">
    <location>
        <begin position="1"/>
        <end position="92"/>
    </location>
</feature>
<feature type="region of interest" description="Domain II" evidence="1">
    <location>
        <begin position="92"/>
        <end position="144"/>
    </location>
</feature>
<feature type="region of interest" description="Domain III, AAA+ region" evidence="1">
    <location>
        <begin position="145"/>
        <end position="367"/>
    </location>
</feature>
<feature type="region of interest" description="Domain IV, binds dsDNA" evidence="1">
    <location>
        <begin position="368"/>
        <end position="487"/>
    </location>
</feature>
<feature type="binding site" evidence="1">
    <location>
        <position position="189"/>
    </location>
    <ligand>
        <name>ATP</name>
        <dbReference type="ChEBI" id="CHEBI:30616"/>
    </ligand>
</feature>
<feature type="binding site" evidence="1">
    <location>
        <position position="191"/>
    </location>
    <ligand>
        <name>ATP</name>
        <dbReference type="ChEBI" id="CHEBI:30616"/>
    </ligand>
</feature>
<feature type="binding site" evidence="1">
    <location>
        <position position="192"/>
    </location>
    <ligand>
        <name>ATP</name>
        <dbReference type="ChEBI" id="CHEBI:30616"/>
    </ligand>
</feature>
<feature type="binding site" evidence="1">
    <location>
        <position position="193"/>
    </location>
    <ligand>
        <name>ATP</name>
        <dbReference type="ChEBI" id="CHEBI:30616"/>
    </ligand>
</feature>
<sequence>MTIKGGVVSQDFSAAFSTVACEPAGVVWNKVCTVLKRELGDAAFGSWIAPAVLREGPSGDVVVVTPTGIARDWIRRSAWRRVSELWTANDATGRRLDLKSRLEFESVGGAGYEAKAEPIEIVLPVSSDVPALAPTNGSKPSPVQGLQERFTFDTFVPGPANEFAHAVARRVASWADGHFNPVLFHGPYGFGKTHLLNALAWEAMRQAPTKRVVYLTAERFLSTFVRAVMDRQTAAFKEELRGADLLIIDDVHFIAGKQSSQEELFHTLTALVEDGRRVVFSSDRAPAAMTEMDARLRSHLSAGLVCGLEPADRALRIGILERKLQALSRQHGFEPTLRAEVLNFLADRFTDSVRELEGALNTLSARAGEGVSRLTLEEVQAILRPHLRAGEKRITIDDIQKATSEHYGMKQVDLLSERRNRAIARPRQAAMWLAKQLTTRSLPDIGRRFGGRDHTTVLHAVRRIEALRADDPVLSQDLETITRKLRG</sequence>
<keyword id="KW-0067">ATP-binding</keyword>
<keyword id="KW-0963">Cytoplasm</keyword>
<keyword id="KW-0235">DNA replication</keyword>
<keyword id="KW-0238">DNA-binding</keyword>
<keyword id="KW-0446">Lipid-binding</keyword>
<keyword id="KW-0547">Nucleotide-binding</keyword>
<gene>
    <name evidence="1" type="primary">dnaA</name>
    <name type="ordered locus">Caul_0001</name>
</gene>
<dbReference type="EMBL" id="CP000927">
    <property type="protein sequence ID" value="ABZ69139.1"/>
    <property type="molecule type" value="Genomic_DNA"/>
</dbReference>
<dbReference type="SMR" id="B0T135"/>
<dbReference type="STRING" id="366602.Caul_0001"/>
<dbReference type="KEGG" id="cak:Caul_0001"/>
<dbReference type="eggNOG" id="COG0593">
    <property type="taxonomic scope" value="Bacteria"/>
</dbReference>
<dbReference type="HOGENOM" id="CLU_026910_3_0_5"/>
<dbReference type="OrthoDB" id="9807019at2"/>
<dbReference type="GO" id="GO:0005737">
    <property type="term" value="C:cytoplasm"/>
    <property type="evidence" value="ECO:0007669"/>
    <property type="project" value="UniProtKB-SubCell"/>
</dbReference>
<dbReference type="GO" id="GO:0005886">
    <property type="term" value="C:plasma membrane"/>
    <property type="evidence" value="ECO:0007669"/>
    <property type="project" value="TreeGrafter"/>
</dbReference>
<dbReference type="GO" id="GO:0005524">
    <property type="term" value="F:ATP binding"/>
    <property type="evidence" value="ECO:0007669"/>
    <property type="project" value="UniProtKB-UniRule"/>
</dbReference>
<dbReference type="GO" id="GO:0016887">
    <property type="term" value="F:ATP hydrolysis activity"/>
    <property type="evidence" value="ECO:0007669"/>
    <property type="project" value="InterPro"/>
</dbReference>
<dbReference type="GO" id="GO:0003688">
    <property type="term" value="F:DNA replication origin binding"/>
    <property type="evidence" value="ECO:0007669"/>
    <property type="project" value="UniProtKB-UniRule"/>
</dbReference>
<dbReference type="GO" id="GO:0008289">
    <property type="term" value="F:lipid binding"/>
    <property type="evidence" value="ECO:0007669"/>
    <property type="project" value="UniProtKB-KW"/>
</dbReference>
<dbReference type="GO" id="GO:0006270">
    <property type="term" value="P:DNA replication initiation"/>
    <property type="evidence" value="ECO:0007669"/>
    <property type="project" value="UniProtKB-UniRule"/>
</dbReference>
<dbReference type="GO" id="GO:0006275">
    <property type="term" value="P:regulation of DNA replication"/>
    <property type="evidence" value="ECO:0007669"/>
    <property type="project" value="UniProtKB-UniRule"/>
</dbReference>
<dbReference type="CDD" id="cd00009">
    <property type="entry name" value="AAA"/>
    <property type="match status" value="1"/>
</dbReference>
<dbReference type="CDD" id="cd06571">
    <property type="entry name" value="Bac_DnaA_C"/>
    <property type="match status" value="1"/>
</dbReference>
<dbReference type="Gene3D" id="1.10.1750.10">
    <property type="match status" value="1"/>
</dbReference>
<dbReference type="Gene3D" id="1.10.8.60">
    <property type="match status" value="1"/>
</dbReference>
<dbReference type="Gene3D" id="3.30.300.180">
    <property type="match status" value="1"/>
</dbReference>
<dbReference type="Gene3D" id="3.40.50.300">
    <property type="entry name" value="P-loop containing nucleotide triphosphate hydrolases"/>
    <property type="match status" value="1"/>
</dbReference>
<dbReference type="HAMAP" id="MF_00377">
    <property type="entry name" value="DnaA_bact"/>
    <property type="match status" value="1"/>
</dbReference>
<dbReference type="InterPro" id="IPR003593">
    <property type="entry name" value="AAA+_ATPase"/>
</dbReference>
<dbReference type="InterPro" id="IPR001957">
    <property type="entry name" value="Chromosome_initiator_DnaA"/>
</dbReference>
<dbReference type="InterPro" id="IPR020591">
    <property type="entry name" value="Chromosome_initiator_DnaA-like"/>
</dbReference>
<dbReference type="InterPro" id="IPR018312">
    <property type="entry name" value="Chromosome_initiator_DnaA_CS"/>
</dbReference>
<dbReference type="InterPro" id="IPR013159">
    <property type="entry name" value="DnaA_C"/>
</dbReference>
<dbReference type="InterPro" id="IPR013317">
    <property type="entry name" value="DnaA_dom"/>
</dbReference>
<dbReference type="InterPro" id="IPR024633">
    <property type="entry name" value="DnaA_N_dom"/>
</dbReference>
<dbReference type="InterPro" id="IPR038454">
    <property type="entry name" value="DnaA_N_sf"/>
</dbReference>
<dbReference type="InterPro" id="IPR027417">
    <property type="entry name" value="P-loop_NTPase"/>
</dbReference>
<dbReference type="InterPro" id="IPR010921">
    <property type="entry name" value="Trp_repressor/repl_initiator"/>
</dbReference>
<dbReference type="NCBIfam" id="TIGR00362">
    <property type="entry name" value="DnaA"/>
    <property type="match status" value="1"/>
</dbReference>
<dbReference type="PANTHER" id="PTHR30050">
    <property type="entry name" value="CHROMOSOMAL REPLICATION INITIATOR PROTEIN DNAA"/>
    <property type="match status" value="1"/>
</dbReference>
<dbReference type="PANTHER" id="PTHR30050:SF2">
    <property type="entry name" value="CHROMOSOMAL REPLICATION INITIATOR PROTEIN DNAA"/>
    <property type="match status" value="1"/>
</dbReference>
<dbReference type="Pfam" id="PF00308">
    <property type="entry name" value="Bac_DnaA"/>
    <property type="match status" value="1"/>
</dbReference>
<dbReference type="Pfam" id="PF08299">
    <property type="entry name" value="Bac_DnaA_C"/>
    <property type="match status" value="1"/>
</dbReference>
<dbReference type="Pfam" id="PF11638">
    <property type="entry name" value="DnaA_N"/>
    <property type="match status" value="1"/>
</dbReference>
<dbReference type="PRINTS" id="PR00051">
    <property type="entry name" value="DNAA"/>
</dbReference>
<dbReference type="SMART" id="SM00382">
    <property type="entry name" value="AAA"/>
    <property type="match status" value="1"/>
</dbReference>
<dbReference type="SMART" id="SM00760">
    <property type="entry name" value="Bac_DnaA_C"/>
    <property type="match status" value="1"/>
</dbReference>
<dbReference type="SUPFAM" id="SSF52540">
    <property type="entry name" value="P-loop containing nucleoside triphosphate hydrolases"/>
    <property type="match status" value="1"/>
</dbReference>
<dbReference type="SUPFAM" id="SSF48295">
    <property type="entry name" value="TrpR-like"/>
    <property type="match status" value="1"/>
</dbReference>
<dbReference type="PROSITE" id="PS01008">
    <property type="entry name" value="DNAA"/>
    <property type="match status" value="1"/>
</dbReference>
<evidence type="ECO:0000255" key="1">
    <source>
        <dbReference type="HAMAP-Rule" id="MF_00377"/>
    </source>
</evidence>
<comment type="function">
    <text evidence="1">Plays an essential role in the initiation and regulation of chromosomal replication. ATP-DnaA binds to the origin of replication (oriC) to initiate formation of the DNA replication initiation complex once per cell cycle. Binds the DnaA box (a 9 base pair repeat at the origin) and separates the double-stranded (ds)DNA. Forms a right-handed helical filament on oriC DNA; dsDNA binds to the exterior of the filament while single-stranded (ss)DNA is stabiized in the filament's interior. The ATP-DnaA-oriC complex binds and stabilizes one strand of the AT-rich DNA unwinding element (DUE), permitting loading of DNA polymerase. After initiation quickly degrades to an ADP-DnaA complex that is not apt for DNA replication. Binds acidic phospholipids.</text>
</comment>
<comment type="subunit">
    <text evidence="1">Oligomerizes as a right-handed, spiral filament on DNA at oriC.</text>
</comment>
<comment type="subcellular location">
    <subcellularLocation>
        <location evidence="1">Cytoplasm</location>
    </subcellularLocation>
</comment>
<comment type="domain">
    <text evidence="1">Domain I is involved in oligomerization and binding regulators, domain II is flexibile and of varying length in different bacteria, domain III forms the AAA+ region, while domain IV binds dsDNA.</text>
</comment>
<comment type="similarity">
    <text evidence="1">Belongs to the DnaA family.</text>
</comment>
<proteinExistence type="inferred from homology"/>